<protein>
    <recommendedName>
        <fullName evidence="1">Tryptophan synthase beta chain</fullName>
        <ecNumber evidence="1">4.2.1.20</ecNumber>
    </recommendedName>
</protein>
<organism>
    <name type="scientific">Methylobacterium radiotolerans (strain ATCC 27329 / DSM 1819 / JCM 2831 / NBRC 15690 / NCIMB 10815 / 0-1)</name>
    <dbReference type="NCBI Taxonomy" id="426355"/>
    <lineage>
        <taxon>Bacteria</taxon>
        <taxon>Pseudomonadati</taxon>
        <taxon>Pseudomonadota</taxon>
        <taxon>Alphaproteobacteria</taxon>
        <taxon>Hyphomicrobiales</taxon>
        <taxon>Methylobacteriaceae</taxon>
        <taxon>Methylobacterium</taxon>
    </lineage>
</organism>
<evidence type="ECO:0000255" key="1">
    <source>
        <dbReference type="HAMAP-Rule" id="MF_00133"/>
    </source>
</evidence>
<proteinExistence type="inferred from homology"/>
<keyword id="KW-0028">Amino-acid biosynthesis</keyword>
<keyword id="KW-0057">Aromatic amino acid biosynthesis</keyword>
<keyword id="KW-0456">Lyase</keyword>
<keyword id="KW-0663">Pyridoxal phosphate</keyword>
<keyword id="KW-0822">Tryptophan biosynthesis</keyword>
<name>TRPB_METRJ</name>
<dbReference type="EC" id="4.2.1.20" evidence="1"/>
<dbReference type="EMBL" id="CP001001">
    <property type="protein sequence ID" value="ACB23867.1"/>
    <property type="molecule type" value="Genomic_DNA"/>
</dbReference>
<dbReference type="RefSeq" id="WP_012318853.1">
    <property type="nucleotide sequence ID" value="NC_010505.1"/>
</dbReference>
<dbReference type="SMR" id="B1LSI6"/>
<dbReference type="STRING" id="426355.Mrad2831_1872"/>
<dbReference type="GeneID" id="6137901"/>
<dbReference type="KEGG" id="mrd:Mrad2831_1872"/>
<dbReference type="eggNOG" id="COG0133">
    <property type="taxonomic scope" value="Bacteria"/>
</dbReference>
<dbReference type="HOGENOM" id="CLU_016734_3_1_5"/>
<dbReference type="OrthoDB" id="9766131at2"/>
<dbReference type="UniPathway" id="UPA00035">
    <property type="reaction ID" value="UER00044"/>
</dbReference>
<dbReference type="Proteomes" id="UP000006589">
    <property type="component" value="Chromosome"/>
</dbReference>
<dbReference type="GO" id="GO:0005737">
    <property type="term" value="C:cytoplasm"/>
    <property type="evidence" value="ECO:0007669"/>
    <property type="project" value="TreeGrafter"/>
</dbReference>
<dbReference type="GO" id="GO:0004834">
    <property type="term" value="F:tryptophan synthase activity"/>
    <property type="evidence" value="ECO:0007669"/>
    <property type="project" value="UniProtKB-UniRule"/>
</dbReference>
<dbReference type="CDD" id="cd06446">
    <property type="entry name" value="Trp-synth_B"/>
    <property type="match status" value="1"/>
</dbReference>
<dbReference type="FunFam" id="3.40.50.1100:FF:000001">
    <property type="entry name" value="Tryptophan synthase beta chain"/>
    <property type="match status" value="1"/>
</dbReference>
<dbReference type="FunFam" id="3.40.50.1100:FF:000004">
    <property type="entry name" value="Tryptophan synthase beta chain"/>
    <property type="match status" value="1"/>
</dbReference>
<dbReference type="Gene3D" id="3.40.50.1100">
    <property type="match status" value="2"/>
</dbReference>
<dbReference type="HAMAP" id="MF_00133">
    <property type="entry name" value="Trp_synth_beta"/>
    <property type="match status" value="1"/>
</dbReference>
<dbReference type="InterPro" id="IPR006653">
    <property type="entry name" value="Trp_synth_b_CS"/>
</dbReference>
<dbReference type="InterPro" id="IPR006654">
    <property type="entry name" value="Trp_synth_beta"/>
</dbReference>
<dbReference type="InterPro" id="IPR023026">
    <property type="entry name" value="Trp_synth_beta/beta-like"/>
</dbReference>
<dbReference type="InterPro" id="IPR001926">
    <property type="entry name" value="TrpB-like_PALP"/>
</dbReference>
<dbReference type="InterPro" id="IPR036052">
    <property type="entry name" value="TrpB-like_PALP_sf"/>
</dbReference>
<dbReference type="NCBIfam" id="TIGR00263">
    <property type="entry name" value="trpB"/>
    <property type="match status" value="1"/>
</dbReference>
<dbReference type="PANTHER" id="PTHR48077:SF3">
    <property type="entry name" value="TRYPTOPHAN SYNTHASE"/>
    <property type="match status" value="1"/>
</dbReference>
<dbReference type="PANTHER" id="PTHR48077">
    <property type="entry name" value="TRYPTOPHAN SYNTHASE-RELATED"/>
    <property type="match status" value="1"/>
</dbReference>
<dbReference type="Pfam" id="PF00291">
    <property type="entry name" value="PALP"/>
    <property type="match status" value="1"/>
</dbReference>
<dbReference type="PIRSF" id="PIRSF001413">
    <property type="entry name" value="Trp_syn_beta"/>
    <property type="match status" value="1"/>
</dbReference>
<dbReference type="SUPFAM" id="SSF53686">
    <property type="entry name" value="Tryptophan synthase beta subunit-like PLP-dependent enzymes"/>
    <property type="match status" value="1"/>
</dbReference>
<dbReference type="PROSITE" id="PS00168">
    <property type="entry name" value="TRP_SYNTHASE_BETA"/>
    <property type="match status" value="1"/>
</dbReference>
<comment type="function">
    <text evidence="1">The beta subunit is responsible for the synthesis of L-tryptophan from indole and L-serine.</text>
</comment>
<comment type="catalytic activity">
    <reaction evidence="1">
        <text>(1S,2R)-1-C-(indol-3-yl)glycerol 3-phosphate + L-serine = D-glyceraldehyde 3-phosphate + L-tryptophan + H2O</text>
        <dbReference type="Rhea" id="RHEA:10532"/>
        <dbReference type="ChEBI" id="CHEBI:15377"/>
        <dbReference type="ChEBI" id="CHEBI:33384"/>
        <dbReference type="ChEBI" id="CHEBI:57912"/>
        <dbReference type="ChEBI" id="CHEBI:58866"/>
        <dbReference type="ChEBI" id="CHEBI:59776"/>
        <dbReference type="EC" id="4.2.1.20"/>
    </reaction>
</comment>
<comment type="cofactor">
    <cofactor evidence="1">
        <name>pyridoxal 5'-phosphate</name>
        <dbReference type="ChEBI" id="CHEBI:597326"/>
    </cofactor>
</comment>
<comment type="pathway">
    <text evidence="1">Amino-acid biosynthesis; L-tryptophan biosynthesis; L-tryptophan from chorismate: step 5/5.</text>
</comment>
<comment type="subunit">
    <text evidence="1">Tetramer of two alpha and two beta chains.</text>
</comment>
<comment type="similarity">
    <text evidence="1">Belongs to the TrpB family.</text>
</comment>
<sequence length="413" mass="44682">MTIAPEPNSFRTGPDERGRFGIFGGRFVAETLMPLILELEAAYETAKKDPAFQAEMESYGTHYIGRPSPLYYAERLTEHLRAKAPAGQGAKVYFKREELNHTGSHKVNNVLGQILLARRMGKPRIIAETGAGQHGVATATLCARFGLKCVVYMGAVDVARQAPNVFRMKMLGAEVVPVESGTKTLKDAMNEALRDWVTNVADTFYCIGTVAGPHPYPAMVRDFQSVIGRETREQMIAQEGRIPDSLVACIGGGSNAMGLFHPFLDDREVEIFGVEAAGHGVQSGLHAASLTGGKPGVLHGNRTYLLMDGDGQIADAHSISAGLDYPGIGPEHAWLHEMGRVTYLSATDSETLEAFKLCSMLEGIIPALEPAHALSKVLELAPQRPAEHLMVMNMSGRGDKDIPQVAEIFGTKI</sequence>
<accession>B1LSI6</accession>
<gene>
    <name evidence="1" type="primary">trpB</name>
    <name type="ordered locus">Mrad2831_1872</name>
</gene>
<feature type="chain" id="PRO_1000198750" description="Tryptophan synthase beta chain">
    <location>
        <begin position="1"/>
        <end position="413"/>
    </location>
</feature>
<feature type="modified residue" description="N6-(pyridoxal phosphate)lysine" evidence="1">
    <location>
        <position position="106"/>
    </location>
</feature>
<reference key="1">
    <citation type="submission" date="2008-03" db="EMBL/GenBank/DDBJ databases">
        <title>Complete sequence of chromosome of Methylobacterium radiotolerans JCM 2831.</title>
        <authorList>
            <consortium name="US DOE Joint Genome Institute"/>
            <person name="Copeland A."/>
            <person name="Lucas S."/>
            <person name="Lapidus A."/>
            <person name="Glavina del Rio T."/>
            <person name="Dalin E."/>
            <person name="Tice H."/>
            <person name="Bruce D."/>
            <person name="Goodwin L."/>
            <person name="Pitluck S."/>
            <person name="Kiss H."/>
            <person name="Brettin T."/>
            <person name="Detter J.C."/>
            <person name="Han C."/>
            <person name="Kuske C.R."/>
            <person name="Schmutz J."/>
            <person name="Larimer F."/>
            <person name="Land M."/>
            <person name="Hauser L."/>
            <person name="Kyrpides N."/>
            <person name="Mikhailova N."/>
            <person name="Marx C.J."/>
            <person name="Richardson P."/>
        </authorList>
    </citation>
    <scope>NUCLEOTIDE SEQUENCE [LARGE SCALE GENOMIC DNA]</scope>
    <source>
        <strain>ATCC 27329 / DSM 1819 / JCM 2831 / NBRC 15690 / NCIMB 10815 / 0-1</strain>
    </source>
</reference>